<name>FAN1_ARATH</name>
<gene>
    <name evidence="6" type="primary">FAN1</name>
    <name type="ordered locus">At1g48360</name>
    <name type="ORF">F11A17.9</name>
</gene>
<accession>Q5XVJ4</accession>
<accession>Q5XVJ5</accession>
<accession>Q9SX69</accession>
<keyword id="KW-0025">Alternative splicing</keyword>
<keyword id="KW-0227">DNA damage</keyword>
<keyword id="KW-0234">DNA repair</keyword>
<keyword id="KW-0378">Hydrolase</keyword>
<keyword id="KW-0460">Magnesium</keyword>
<keyword id="KW-0464">Manganese</keyword>
<keyword id="KW-0479">Metal-binding</keyword>
<keyword id="KW-0540">Nuclease</keyword>
<keyword id="KW-0539">Nucleus</keyword>
<keyword id="KW-1185">Reference proteome</keyword>
<evidence type="ECO:0000250" key="1">
    <source>
        <dbReference type="UniProtKB" id="Q9I2N0"/>
    </source>
</evidence>
<evidence type="ECO:0000250" key="2">
    <source>
        <dbReference type="UniProtKB" id="Q9Y2M0"/>
    </source>
</evidence>
<evidence type="ECO:0000269" key="3">
    <source>
    </source>
</evidence>
<evidence type="ECO:0000303" key="4">
    <source>
    </source>
</evidence>
<evidence type="ECO:0000303" key="5">
    <source>
    </source>
</evidence>
<evidence type="ECO:0000303" key="6">
    <source>
    </source>
</evidence>
<evidence type="ECO:0000305" key="7"/>
<sequence>MLTGRESLLRLIGKRRRFLPNRHLLLSAHTPNSLNLEFNDYGNLVSLAGDDCRLSEDPTSSDDPSKFSDDLSLSTRKKRRLTQTTLLQSSFLSVPKQLEDGLVICTQQKSILDSETFEFSLVQRSEPSESICCKVEDGSCSPSREESLKTVTLDEDNGEAIETFIVGRKFSDVQDLEIGGDIFLLRHPENVKDRNAIKVISGDSEMLGYLPKDISQCLSPLIDDYDLKFEGTITSVPKKSSEAVLIKVVCHKMRSDGWKECELYGDFKPLWEKVLQVVEHQMQFPPKTTRYQLNFNVLLQEVLRSCSHLFTADEKAFLESFPTLSEDSQRLFIRLYTRKGPWFRLSNISYPEVTDSLQALKDLTVRGFMSSVKDANELDNQKMKEITELLNVTELRDILSMNKVFSRTSRKRDLINSLCSCYNDGTRINLATVILERTGLCAKVSSTAESLIWRVERLFFLNGEQDLSSFVLLDLGIIKYPTYKCIDSEQIFSNRTKLLAYEEAIEVAQLMDESLDNEDPQTVLKCIIIAETRISSSSLDSAHAAAFNRFTAPWVNSKVVLLGVSFFENQKRYNRAVYLLRRLLSCFNCDGRRGYWTVRLSTDLEHMGRPNESLTVAEQGLLDPWVRAGSRVALQRRILRLAKPPRRWKTPTFSNLVDNKIPEVTIQGRSLNCEVGIKNRFYGEDGEQCGVEQLALQYYSGEGGGWQGIHTESSIWLTIFGLLMWDILFSDVPGVFQTRFQTAPLDLETESFYLTRKETIESQLEKVANGMAEEILIISYETQRGTACRGVAWERFSLEELRAAVACVGGMCIASLCRHLAQDYRSWCSGMPDLLVWRFKENGYEGEAKLVEVKSEKDRLSEQQRAWLLLLMDSGFNVEICKVRPASLIKT</sequence>
<feature type="chain" id="PRO_0000398623" description="Fanconi-associated nuclease 1 homolog">
    <location>
        <begin position="1"/>
        <end position="891"/>
    </location>
</feature>
<feature type="domain" description="VRR-NUC">
    <location>
        <begin position="770"/>
        <end position="884"/>
    </location>
</feature>
<feature type="binding site" evidence="1">
    <location>
        <position position="712"/>
    </location>
    <ligand>
        <name>Mn(2+)</name>
        <dbReference type="ChEBI" id="CHEBI:29035"/>
        <label>2</label>
    </ligand>
</feature>
<feature type="binding site" evidence="1">
    <location>
        <position position="833"/>
    </location>
    <ligand>
        <name>Mn(2+)</name>
        <dbReference type="ChEBI" id="CHEBI:29035"/>
        <label>1</label>
    </ligand>
</feature>
<feature type="binding site" evidence="1">
    <location>
        <position position="833"/>
    </location>
    <ligand>
        <name>Mn(2+)</name>
        <dbReference type="ChEBI" id="CHEBI:29035"/>
        <label>2</label>
    </ligand>
</feature>
<feature type="binding site" evidence="1">
    <location>
        <position position="852"/>
    </location>
    <ligand>
        <name>Mn(2+)</name>
        <dbReference type="ChEBI" id="CHEBI:29035"/>
        <label>1</label>
    </ligand>
</feature>
<feature type="binding site" evidence="1">
    <location>
        <position position="853"/>
    </location>
    <ligand>
        <name>Mn(2+)</name>
        <dbReference type="ChEBI" id="CHEBI:29035"/>
        <label>1</label>
    </ligand>
</feature>
<feature type="splice variant" id="VSP_039784" description="In isoform 2." evidence="4">
    <original>AIEVAQLMDE</original>
    <variation>LHGLTQRWFS</variation>
    <location>
        <begin position="504"/>
        <end position="513"/>
    </location>
</feature>
<feature type="splice variant" id="VSP_039785" description="In isoform 2." evidence="4">
    <location>
        <begin position="514"/>
        <end position="891"/>
    </location>
</feature>
<feature type="splice variant" id="VSP_039786" description="In isoform 3." evidence="4 5">
    <original>TAPLDLETESFYLTRKETIESQLEKVANGMAEEILIISYETQRGTACRGVAWERFSLEELRAAVACVGGMCIASLCRHLAQDYRSWCSGMPDLLVWRFKENGYEGEAKLVEVKSEKDRLSEQQRAWLLLLMDSGFNVEICKVRPASLIKT</original>
    <variation>VNETQ</variation>
    <location>
        <begin position="742"/>
        <end position="891"/>
    </location>
</feature>
<comment type="function">
    <text evidence="2 3">Nuclease required for the repair of DNA interstrand cross-links (ICLs) (PubMed:25779053). Acts as a 5'-3' exonuclease that anchors at a cut end of DNA and cleaves DNA successively at every third nucleotide, allowing to excise an ICL from one strand through flanking incisions (By similarity). May act upstream of the helicase RECQL4A and the ATPase RAD5A, which is involved in error-free post-replicative repair. Functions independently of MUS81 pathway, but in a similar pathway with RECQ4A, RAD5A and MFH1 in ICL repair (PubMed:25779053).</text>
</comment>
<comment type="catalytic activity">
    <reaction evidence="2">
        <text>Hydrolytically removes 5'-nucleotides successively from the 3'-hydroxy termini of 3'-hydroxy-terminated oligonucleotides.</text>
        <dbReference type="EC" id="3.1.4.1"/>
    </reaction>
</comment>
<comment type="cofactor">
    <cofactor evidence="1">
        <name>Mn(2+)</name>
        <dbReference type="ChEBI" id="CHEBI:29035"/>
    </cofactor>
    <cofactor evidence="1">
        <name>Mg(2+)</name>
        <dbReference type="ChEBI" id="CHEBI:18420"/>
    </cofactor>
    <text evidence="1">Binds 2 magnesium or manganese ions per subunit.</text>
</comment>
<comment type="subcellular location">
    <subcellularLocation>
        <location evidence="2">Nucleus</location>
    </subcellularLocation>
    <text evidence="2">Localizes to stalled replication forks via its UBZ-type zinc finger.</text>
</comment>
<comment type="alternative products">
    <event type="alternative splicing"/>
    <isoform>
        <id>Q5XVJ4-1</id>
        <name>1</name>
        <sequence type="displayed"/>
    </isoform>
    <isoform>
        <id>Q5XVJ4-2</id>
        <name>2</name>
        <sequence type="described" ref="VSP_039784 VSP_039785"/>
    </isoform>
    <isoform>
        <id>Q5XVJ4-3</id>
        <name>3</name>
        <sequence type="described" ref="VSP_039786"/>
    </isoform>
</comment>
<comment type="similarity">
    <text evidence="7">Belongs to the FAN1 family.</text>
</comment>
<comment type="sequence caution" evidence="7">
    <conflict type="erroneous gene model prediction">
        <sequence resource="EMBL-CDS" id="AAD49761"/>
    </conflict>
</comment>
<reference key="1">
    <citation type="journal article" date="2000" name="Nature">
        <title>Sequence and analysis of chromosome 1 of the plant Arabidopsis thaliana.</title>
        <authorList>
            <person name="Theologis A."/>
            <person name="Ecker J.R."/>
            <person name="Palm C.J."/>
            <person name="Federspiel N.A."/>
            <person name="Kaul S."/>
            <person name="White O."/>
            <person name="Alonso J."/>
            <person name="Altafi H."/>
            <person name="Araujo R."/>
            <person name="Bowman C.L."/>
            <person name="Brooks S.Y."/>
            <person name="Buehler E."/>
            <person name="Chan A."/>
            <person name="Chao Q."/>
            <person name="Chen H."/>
            <person name="Cheuk R.F."/>
            <person name="Chin C.W."/>
            <person name="Chung M.K."/>
            <person name="Conn L."/>
            <person name="Conway A.B."/>
            <person name="Conway A.R."/>
            <person name="Creasy T.H."/>
            <person name="Dewar K."/>
            <person name="Dunn P."/>
            <person name="Etgu P."/>
            <person name="Feldblyum T.V."/>
            <person name="Feng J.-D."/>
            <person name="Fong B."/>
            <person name="Fujii C.Y."/>
            <person name="Gill J.E."/>
            <person name="Goldsmith A.D."/>
            <person name="Haas B."/>
            <person name="Hansen N.F."/>
            <person name="Hughes B."/>
            <person name="Huizar L."/>
            <person name="Hunter J.L."/>
            <person name="Jenkins J."/>
            <person name="Johnson-Hopson C."/>
            <person name="Khan S."/>
            <person name="Khaykin E."/>
            <person name="Kim C.J."/>
            <person name="Koo H.L."/>
            <person name="Kremenetskaia I."/>
            <person name="Kurtz D.B."/>
            <person name="Kwan A."/>
            <person name="Lam B."/>
            <person name="Langin-Hooper S."/>
            <person name="Lee A."/>
            <person name="Lee J.M."/>
            <person name="Lenz C.A."/>
            <person name="Li J.H."/>
            <person name="Li Y.-P."/>
            <person name="Lin X."/>
            <person name="Liu S.X."/>
            <person name="Liu Z.A."/>
            <person name="Luros J.S."/>
            <person name="Maiti R."/>
            <person name="Marziali A."/>
            <person name="Militscher J."/>
            <person name="Miranda M."/>
            <person name="Nguyen M."/>
            <person name="Nierman W.C."/>
            <person name="Osborne B.I."/>
            <person name="Pai G."/>
            <person name="Peterson J."/>
            <person name="Pham P.K."/>
            <person name="Rizzo M."/>
            <person name="Rooney T."/>
            <person name="Rowley D."/>
            <person name="Sakano H."/>
            <person name="Salzberg S.L."/>
            <person name="Schwartz J.R."/>
            <person name="Shinn P."/>
            <person name="Southwick A.M."/>
            <person name="Sun H."/>
            <person name="Tallon L.J."/>
            <person name="Tambunga G."/>
            <person name="Toriumi M.J."/>
            <person name="Town C.D."/>
            <person name="Utterback T."/>
            <person name="Van Aken S."/>
            <person name="Vaysberg M."/>
            <person name="Vysotskaia V.S."/>
            <person name="Walker M."/>
            <person name="Wu D."/>
            <person name="Yu G."/>
            <person name="Fraser C.M."/>
            <person name="Venter J.C."/>
            <person name="Davis R.W."/>
        </authorList>
    </citation>
    <scope>NUCLEOTIDE SEQUENCE [LARGE SCALE GENOMIC DNA]</scope>
    <source>
        <strain>cv. Columbia</strain>
    </source>
</reference>
<reference key="2">
    <citation type="journal article" date="2017" name="Plant J.">
        <title>Araport11: a complete reannotation of the Arabidopsis thaliana reference genome.</title>
        <authorList>
            <person name="Cheng C.Y."/>
            <person name="Krishnakumar V."/>
            <person name="Chan A.P."/>
            <person name="Thibaud-Nissen F."/>
            <person name="Schobel S."/>
            <person name="Town C.D."/>
        </authorList>
    </citation>
    <scope>GENOME REANNOTATION</scope>
    <source>
        <strain>cv. Columbia</strain>
    </source>
</reference>
<reference key="3">
    <citation type="journal article" date="2005" name="Plant Physiol.">
        <title>Analysis of the cDNAs of hypothetical genes on Arabidopsis chromosome 2 reveals numerous transcript variants.</title>
        <authorList>
            <person name="Xiao Y.-L."/>
            <person name="Smith S.R."/>
            <person name="Ishmael N."/>
            <person name="Redman J.C."/>
            <person name="Kumar N."/>
            <person name="Monaghan E.L."/>
            <person name="Ayele M."/>
            <person name="Haas B.J."/>
            <person name="Wu H.C."/>
            <person name="Town C.D."/>
        </authorList>
    </citation>
    <scope>NUCLEOTIDE SEQUENCE [LARGE SCALE MRNA] (ISOFORMS 2 AND 3)</scope>
    <source>
        <strain>cv. Columbia</strain>
    </source>
</reference>
<reference key="4">
    <citation type="journal article" date="2006" name="Plant Biotechnol. J.">
        <title>Simultaneous high-throughput recombinational cloning of open reading frames in closed and open configurations.</title>
        <authorList>
            <person name="Underwood B.A."/>
            <person name="Vanderhaeghen R."/>
            <person name="Whitford R."/>
            <person name="Town C.D."/>
            <person name="Hilson P."/>
        </authorList>
    </citation>
    <scope>NUCLEOTIDE SEQUENCE [LARGE SCALE MRNA] (ISOFORM 3)</scope>
    <source>
        <strain>cv. Columbia</strain>
    </source>
</reference>
<reference key="5">
    <citation type="journal article" date="2015" name="Nucleic Acids Res.">
        <title>The nuclease FAN1 is involved in DNA crosslink repair in Arabidopsis thaliana independently of the nuclease MUS81.</title>
        <authorList>
            <person name="Herrmann N.J."/>
            <person name="Knoll A."/>
            <person name="Puchta H."/>
        </authorList>
    </citation>
    <scope>FUNCTION</scope>
</reference>
<organism>
    <name type="scientific">Arabidopsis thaliana</name>
    <name type="common">Mouse-ear cress</name>
    <dbReference type="NCBI Taxonomy" id="3702"/>
    <lineage>
        <taxon>Eukaryota</taxon>
        <taxon>Viridiplantae</taxon>
        <taxon>Streptophyta</taxon>
        <taxon>Embryophyta</taxon>
        <taxon>Tracheophyta</taxon>
        <taxon>Spermatophyta</taxon>
        <taxon>Magnoliopsida</taxon>
        <taxon>eudicotyledons</taxon>
        <taxon>Gunneridae</taxon>
        <taxon>Pentapetalae</taxon>
        <taxon>rosids</taxon>
        <taxon>malvids</taxon>
        <taxon>Brassicales</taxon>
        <taxon>Brassicaceae</taxon>
        <taxon>Camelineae</taxon>
        <taxon>Arabidopsis</taxon>
    </lineage>
</organism>
<proteinExistence type="evidence at transcript level"/>
<dbReference type="EC" id="3.1.4.1" evidence="2"/>
<dbReference type="EMBL" id="AC007932">
    <property type="protein sequence ID" value="AAD49761.2"/>
    <property type="status" value="ALT_SEQ"/>
    <property type="molecule type" value="Genomic_DNA"/>
</dbReference>
<dbReference type="EMBL" id="CP002684">
    <property type="protein sequence ID" value="AEE32278.1"/>
    <property type="molecule type" value="Genomic_DNA"/>
</dbReference>
<dbReference type="EMBL" id="CP002684">
    <property type="protein sequence ID" value="AEE32279.1"/>
    <property type="molecule type" value="Genomic_DNA"/>
</dbReference>
<dbReference type="EMBL" id="CP002684">
    <property type="protein sequence ID" value="AEE32280.1"/>
    <property type="molecule type" value="Genomic_DNA"/>
</dbReference>
<dbReference type="EMBL" id="AY735527">
    <property type="protein sequence ID" value="AAU44397.1"/>
    <property type="molecule type" value="mRNA"/>
</dbReference>
<dbReference type="EMBL" id="AY735528">
    <property type="protein sequence ID" value="AAU44398.1"/>
    <property type="molecule type" value="mRNA"/>
</dbReference>
<dbReference type="EMBL" id="DQ653403">
    <property type="protein sequence ID" value="ABK28782.1"/>
    <property type="molecule type" value="mRNA"/>
</dbReference>
<dbReference type="PIR" id="F96523">
    <property type="entry name" value="F96523"/>
</dbReference>
<dbReference type="RefSeq" id="NP_001117447.1">
    <molecule id="Q5XVJ4-1"/>
    <property type="nucleotide sequence ID" value="NM_001123975.2"/>
</dbReference>
<dbReference type="RefSeq" id="NP_001319172.1">
    <molecule id="Q5XVJ4-2"/>
    <property type="nucleotide sequence ID" value="NM_001333325.1"/>
</dbReference>
<dbReference type="RefSeq" id="NP_175269.2">
    <molecule id="Q5XVJ4-3"/>
    <property type="nucleotide sequence ID" value="NM_103732.3"/>
</dbReference>
<dbReference type="SMR" id="Q5XVJ4"/>
<dbReference type="BioGRID" id="26481">
    <property type="interactions" value="1"/>
</dbReference>
<dbReference type="FunCoup" id="Q5XVJ4">
    <property type="interactions" value="3010"/>
</dbReference>
<dbReference type="STRING" id="3702.Q5XVJ4"/>
<dbReference type="PaxDb" id="3702-AT1G48360.2"/>
<dbReference type="EnsemblPlants" id="AT1G48360.1">
    <molecule id="Q5XVJ4-3"/>
    <property type="protein sequence ID" value="AT1G48360.1"/>
    <property type="gene ID" value="AT1G48360"/>
</dbReference>
<dbReference type="EnsemblPlants" id="AT1G48360.2">
    <molecule id="Q5XVJ4-1"/>
    <property type="protein sequence ID" value="AT1G48360.2"/>
    <property type="gene ID" value="AT1G48360"/>
</dbReference>
<dbReference type="EnsemblPlants" id="AT1G48360.3">
    <molecule id="Q5XVJ4-2"/>
    <property type="protein sequence ID" value="AT1G48360.3"/>
    <property type="gene ID" value="AT1G48360"/>
</dbReference>
<dbReference type="GeneID" id="841256"/>
<dbReference type="Gramene" id="AT1G48360.1">
    <molecule id="Q5XVJ4-3"/>
    <property type="protein sequence ID" value="AT1G48360.1"/>
    <property type="gene ID" value="AT1G48360"/>
</dbReference>
<dbReference type="Gramene" id="AT1G48360.2">
    <molecule id="Q5XVJ4-1"/>
    <property type="protein sequence ID" value="AT1G48360.2"/>
    <property type="gene ID" value="AT1G48360"/>
</dbReference>
<dbReference type="Gramene" id="AT1G48360.3">
    <molecule id="Q5XVJ4-2"/>
    <property type="protein sequence ID" value="AT1G48360.3"/>
    <property type="gene ID" value="AT1G48360"/>
</dbReference>
<dbReference type="KEGG" id="ath:AT1G48360"/>
<dbReference type="Araport" id="AT1G48360"/>
<dbReference type="TAIR" id="AT1G48360">
    <property type="gene designation" value="FAN1"/>
</dbReference>
<dbReference type="eggNOG" id="KOG2143">
    <property type="taxonomic scope" value="Eukaryota"/>
</dbReference>
<dbReference type="HOGENOM" id="CLU_005116_2_0_1"/>
<dbReference type="InParanoid" id="Q5XVJ4"/>
<dbReference type="PhylomeDB" id="Q5XVJ4"/>
<dbReference type="PRO" id="PR:Q5XVJ4"/>
<dbReference type="Proteomes" id="UP000006548">
    <property type="component" value="Chromosome 1"/>
</dbReference>
<dbReference type="ExpressionAtlas" id="Q5XVJ4">
    <property type="expression patterns" value="baseline and differential"/>
</dbReference>
<dbReference type="GO" id="GO:0005634">
    <property type="term" value="C:nucleus"/>
    <property type="evidence" value="ECO:0007669"/>
    <property type="project" value="UniProtKB-SubCell"/>
</dbReference>
<dbReference type="GO" id="GO:0016818">
    <property type="term" value="F:hydrolase activity, acting on acid anhydrides, in phosphorus-containing anhydrides"/>
    <property type="evidence" value="ECO:0007669"/>
    <property type="project" value="InterPro"/>
</dbReference>
<dbReference type="GO" id="GO:0003676">
    <property type="term" value="F:nucleic acid binding"/>
    <property type="evidence" value="ECO:0007669"/>
    <property type="project" value="InterPro"/>
</dbReference>
<dbReference type="GO" id="GO:0004528">
    <property type="term" value="F:phosphodiesterase I activity"/>
    <property type="evidence" value="ECO:0007669"/>
    <property type="project" value="UniProtKB-EC"/>
</dbReference>
<dbReference type="GO" id="GO:0008270">
    <property type="term" value="F:zinc ion binding"/>
    <property type="evidence" value="ECO:0007669"/>
    <property type="project" value="InterPro"/>
</dbReference>
<dbReference type="GO" id="GO:0007129">
    <property type="term" value="P:homologous chromosome pairing at meiosis"/>
    <property type="evidence" value="ECO:0000316"/>
    <property type="project" value="TAIR"/>
</dbReference>
<dbReference type="GO" id="GO:0036297">
    <property type="term" value="P:interstrand cross-link repair"/>
    <property type="evidence" value="ECO:0000315"/>
    <property type="project" value="TAIR"/>
</dbReference>
<dbReference type="CDD" id="cd22326">
    <property type="entry name" value="FAN1-like"/>
    <property type="match status" value="1"/>
</dbReference>
<dbReference type="FunFam" id="3.30.70.2330:FF:000002">
    <property type="entry name" value="Fanconi-associated nuclease"/>
    <property type="match status" value="1"/>
</dbReference>
<dbReference type="Gene3D" id="3.30.70.2330">
    <property type="match status" value="1"/>
</dbReference>
<dbReference type="Gene3D" id="3.40.1350.10">
    <property type="match status" value="1"/>
</dbReference>
<dbReference type="InterPro" id="IPR033315">
    <property type="entry name" value="Fan1-like"/>
</dbReference>
<dbReference type="InterPro" id="IPR049132">
    <property type="entry name" value="FAN1-like_euk"/>
</dbReference>
<dbReference type="InterPro" id="IPR049126">
    <property type="entry name" value="FAN1-like_TPR"/>
</dbReference>
<dbReference type="InterPro" id="IPR049125">
    <property type="entry name" value="FAN1-like_WH"/>
</dbReference>
<dbReference type="InterPro" id="IPR014905">
    <property type="entry name" value="HIRAN"/>
</dbReference>
<dbReference type="InterPro" id="IPR011856">
    <property type="entry name" value="tRNA_endonuc-like_dom_sf"/>
</dbReference>
<dbReference type="InterPro" id="IPR014883">
    <property type="entry name" value="VRR_NUC"/>
</dbReference>
<dbReference type="PANTHER" id="PTHR15749">
    <property type="entry name" value="FANCONI-ASSOCIATED NUCLEASE 1"/>
    <property type="match status" value="1"/>
</dbReference>
<dbReference type="PANTHER" id="PTHR15749:SF4">
    <property type="entry name" value="FANCONI-ASSOCIATED NUCLEASE 1"/>
    <property type="match status" value="1"/>
</dbReference>
<dbReference type="Pfam" id="PF21315">
    <property type="entry name" value="FAN1_HTH"/>
    <property type="match status" value="1"/>
</dbReference>
<dbReference type="Pfam" id="PF21170">
    <property type="entry name" value="FAN1_TPR"/>
    <property type="match status" value="1"/>
</dbReference>
<dbReference type="Pfam" id="PF08797">
    <property type="entry name" value="HIRAN"/>
    <property type="match status" value="1"/>
</dbReference>
<dbReference type="Pfam" id="PF08774">
    <property type="entry name" value="VRR_NUC"/>
    <property type="match status" value="1"/>
</dbReference>
<dbReference type="SMART" id="SM00910">
    <property type="entry name" value="HIRAN"/>
    <property type="match status" value="1"/>
</dbReference>
<dbReference type="SMART" id="SM00990">
    <property type="entry name" value="VRR_NUC"/>
    <property type="match status" value="1"/>
</dbReference>
<protein>
    <recommendedName>
        <fullName evidence="7">Fanconi-associated nuclease 1 homolog</fullName>
        <shortName evidence="6">AtFAN1</shortName>
        <ecNumber evidence="2">3.1.4.1</ecNumber>
    </recommendedName>
</protein>